<protein>
    <recommendedName>
        <fullName evidence="1">Flap endonuclease 1</fullName>
        <shortName evidence="1">FEN-1</shortName>
        <ecNumber evidence="1">3.1.-.-</ecNumber>
    </recommendedName>
    <alternativeName>
        <fullName evidence="1">Flap structure-specific endonuclease 1</fullName>
    </alternativeName>
</protein>
<keyword id="KW-0227">DNA damage</keyword>
<keyword id="KW-0234">DNA repair</keyword>
<keyword id="KW-0235">DNA replication</keyword>
<keyword id="KW-0255">Endonuclease</keyword>
<keyword id="KW-0269">Exonuclease</keyword>
<keyword id="KW-0378">Hydrolase</keyword>
<keyword id="KW-0460">Magnesium</keyword>
<keyword id="KW-0479">Metal-binding</keyword>
<keyword id="KW-0496">Mitochondrion</keyword>
<keyword id="KW-0540">Nuclease</keyword>
<keyword id="KW-0539">Nucleus</keyword>
<keyword id="KW-0597">Phosphoprotein</keyword>
<keyword id="KW-1185">Reference proteome</keyword>
<accession>A3FPN7</accession>
<comment type="function">
    <text evidence="1">Structure-specific nuclease with 5'-flap endonuclease and 5'-3' exonuclease activities involved in DNA replication and repair. During DNA replication, cleaves the 5'-overhanging flap structure that is generated by displacement synthesis when DNA polymerase encounters the 5'-end of a downstream Okazaki fragment. It enters the flap from the 5'-end and then tracks to cleave the flap base, leaving a nick for ligation. Also involved in the long patch base excision repair (LP-BER) pathway, by cleaving within the apurinic/apyrimidinic (AP) site-terminated flap. Acts as a genome stabilization factor that prevents flaps from equilibrating into structures that lead to duplications and deletions. Also possesses 5'-3' exonuclease activity on nicked or gapped double-stranded DNA, and exhibits RNase H activity. Also involved in replication and repair of rDNA and in repairing mitochondrial DNA.</text>
</comment>
<comment type="cofactor">
    <cofactor evidence="1">
        <name>Mg(2+)</name>
        <dbReference type="ChEBI" id="CHEBI:18420"/>
    </cofactor>
    <text evidence="1">Binds 2 magnesium ions per subunit. They probably participate in the reaction catalyzed by the enzyme. May bind an additional third magnesium ion after substrate binding.</text>
</comment>
<comment type="subunit">
    <text evidence="1">Interacts with PCNA. Three molecules of FEN1 bind to one PCNA trimer with each molecule binding to one PCNA monomer. PCNA stimulates the nuclease activity without altering cleavage specificity.</text>
</comment>
<comment type="subcellular location">
    <subcellularLocation>
        <location evidence="1">Nucleus</location>
        <location evidence="1">Nucleolus</location>
    </subcellularLocation>
    <subcellularLocation>
        <location evidence="1">Nucleus</location>
        <location evidence="1">Nucleoplasm</location>
    </subcellularLocation>
    <subcellularLocation>
        <location evidence="1">Mitochondrion</location>
    </subcellularLocation>
    <text evidence="1">Resides mostly in the nucleoli and relocalizes to the nucleoplasm upon DNA damage.</text>
</comment>
<comment type="PTM">
    <text evidence="1">Phosphorylated. Phosphorylation upon DNA damage induces relocalization to the nuclear plasma.</text>
</comment>
<comment type="similarity">
    <text evidence="1">Belongs to the XPG/RAD2 endonuclease family. FEN1 subfamily.</text>
</comment>
<proteinExistence type="inferred from homology"/>
<sequence length="490" mass="54994">MGIKGLTKFLADNAPKSIQQQGIGSLLGKRVAIDASMWIYQFLAAIREGSQWGNLTNSSGESTSHINGMLSRTTRLLEAGIKPVFVFDGAPPEMKKDELTKRDERREKALAELEKAQEIGDEELIKKQSVRTIHVTKKQVEDVKKLLGFLGMPCIDAPSEAEAQCAELCKDGLVYGVVTEDADSLTFGTPIQIKQLNFSESSNKITDKSPSKQKNGMQIIKLSLILSELDINMDQFIDLCILSGCDYCGTIRGIGTSTAYKLLKKYHNIESILKNIDQTKNPIPGNFDFSKVRELFKNPLVSKNNQIKDLIKWSNPKYEELMEWLIKEQNFNEARVNSYCERIKKSKNKTSQTCLDGFFKTASNERKNTHETPSRPPLSEKQKSETRKEVDSSLSCDKKKVKIEETKIISEWGAPVSKNLSSQAEKDLAENSSEAPNQSSEIKVNKIEENKDSESSTVENTPSLQTKSPEPTMRPVKRKLNRLISESDED</sequence>
<dbReference type="EC" id="3.1.-.-" evidence="1"/>
<dbReference type="EMBL" id="AAEE01000001">
    <property type="protein sequence ID" value="EAZ51576.1"/>
    <property type="molecule type" value="Genomic_DNA"/>
</dbReference>
<dbReference type="RefSeq" id="XP_001388383.1">
    <property type="nucleotide sequence ID" value="XM_001388346.1"/>
</dbReference>
<dbReference type="SMR" id="A3FPN7"/>
<dbReference type="FunCoup" id="A3FPN7">
    <property type="interactions" value="494"/>
</dbReference>
<dbReference type="STRING" id="353152.A3FPN7"/>
<dbReference type="EnsemblProtists" id="EAZ51576">
    <property type="protein sequence ID" value="EAZ51576"/>
    <property type="gene ID" value="cgd7_2140"/>
</dbReference>
<dbReference type="GeneID" id="3371825"/>
<dbReference type="KEGG" id="cpv:cgd7_2140"/>
<dbReference type="VEuPathDB" id="CryptoDB:cgd7_2140"/>
<dbReference type="InParanoid" id="A3FPN7"/>
<dbReference type="OMA" id="MGIPWVQ"/>
<dbReference type="OrthoDB" id="1937206at2759"/>
<dbReference type="Proteomes" id="UP000006726">
    <property type="component" value="Chromosome 7"/>
</dbReference>
<dbReference type="GO" id="GO:0005739">
    <property type="term" value="C:mitochondrion"/>
    <property type="evidence" value="ECO:0007669"/>
    <property type="project" value="UniProtKB-SubCell"/>
</dbReference>
<dbReference type="GO" id="GO:0005730">
    <property type="term" value="C:nucleolus"/>
    <property type="evidence" value="ECO:0007669"/>
    <property type="project" value="UniProtKB-SubCell"/>
</dbReference>
<dbReference type="GO" id="GO:0005654">
    <property type="term" value="C:nucleoplasm"/>
    <property type="evidence" value="ECO:0007669"/>
    <property type="project" value="UniProtKB-SubCell"/>
</dbReference>
<dbReference type="GO" id="GO:0008409">
    <property type="term" value="F:5'-3' exonuclease activity"/>
    <property type="evidence" value="ECO:0007669"/>
    <property type="project" value="UniProtKB-UniRule"/>
</dbReference>
<dbReference type="GO" id="GO:0017108">
    <property type="term" value="F:5'-flap endonuclease activity"/>
    <property type="evidence" value="ECO:0007669"/>
    <property type="project" value="UniProtKB-UniRule"/>
</dbReference>
<dbReference type="GO" id="GO:0003677">
    <property type="term" value="F:DNA binding"/>
    <property type="evidence" value="ECO:0007669"/>
    <property type="project" value="UniProtKB-UniRule"/>
</dbReference>
<dbReference type="GO" id="GO:0000287">
    <property type="term" value="F:magnesium ion binding"/>
    <property type="evidence" value="ECO:0007669"/>
    <property type="project" value="UniProtKB-UniRule"/>
</dbReference>
<dbReference type="GO" id="GO:0006284">
    <property type="term" value="P:base-excision repair"/>
    <property type="evidence" value="ECO:0007669"/>
    <property type="project" value="UniProtKB-UniRule"/>
</dbReference>
<dbReference type="GO" id="GO:0043137">
    <property type="term" value="P:DNA replication, removal of RNA primer"/>
    <property type="evidence" value="ECO:0007669"/>
    <property type="project" value="UniProtKB-UniRule"/>
</dbReference>
<dbReference type="CDD" id="cd09907">
    <property type="entry name" value="H3TH_FEN1-Euk"/>
    <property type="match status" value="1"/>
</dbReference>
<dbReference type="CDD" id="cd09867">
    <property type="entry name" value="PIN_FEN1"/>
    <property type="match status" value="1"/>
</dbReference>
<dbReference type="FunFam" id="1.10.150.20:FF:000009">
    <property type="entry name" value="Flap endonuclease 1"/>
    <property type="match status" value="1"/>
</dbReference>
<dbReference type="FunFam" id="3.40.50.1010:FF:000016">
    <property type="entry name" value="Flap endonuclease 1"/>
    <property type="match status" value="1"/>
</dbReference>
<dbReference type="Gene3D" id="1.10.150.20">
    <property type="entry name" value="5' to 3' exonuclease, C-terminal subdomain"/>
    <property type="match status" value="1"/>
</dbReference>
<dbReference type="Gene3D" id="3.40.50.1010">
    <property type="entry name" value="5'-nuclease"/>
    <property type="match status" value="1"/>
</dbReference>
<dbReference type="HAMAP" id="MF_00614">
    <property type="entry name" value="Fen"/>
    <property type="match status" value="1"/>
</dbReference>
<dbReference type="InterPro" id="IPR002421">
    <property type="entry name" value="5-3_exonuclease"/>
</dbReference>
<dbReference type="InterPro" id="IPR036279">
    <property type="entry name" value="5-3_exonuclease_C_sf"/>
</dbReference>
<dbReference type="InterPro" id="IPR023426">
    <property type="entry name" value="Flap_endonuc"/>
</dbReference>
<dbReference type="InterPro" id="IPR008918">
    <property type="entry name" value="HhH2"/>
</dbReference>
<dbReference type="InterPro" id="IPR029060">
    <property type="entry name" value="PIN-like_dom_sf"/>
</dbReference>
<dbReference type="InterPro" id="IPR006086">
    <property type="entry name" value="XPG-I_dom"/>
</dbReference>
<dbReference type="InterPro" id="IPR006084">
    <property type="entry name" value="XPG/Rad2"/>
</dbReference>
<dbReference type="InterPro" id="IPR019974">
    <property type="entry name" value="XPG_CS"/>
</dbReference>
<dbReference type="InterPro" id="IPR006085">
    <property type="entry name" value="XPG_DNA_repair_N"/>
</dbReference>
<dbReference type="PANTHER" id="PTHR11081:SF9">
    <property type="entry name" value="FLAP ENDONUCLEASE 1"/>
    <property type="match status" value="1"/>
</dbReference>
<dbReference type="PANTHER" id="PTHR11081">
    <property type="entry name" value="FLAP ENDONUCLEASE FAMILY MEMBER"/>
    <property type="match status" value="1"/>
</dbReference>
<dbReference type="Pfam" id="PF00867">
    <property type="entry name" value="XPG_I"/>
    <property type="match status" value="1"/>
</dbReference>
<dbReference type="Pfam" id="PF00752">
    <property type="entry name" value="XPG_N"/>
    <property type="match status" value="1"/>
</dbReference>
<dbReference type="PRINTS" id="PR00853">
    <property type="entry name" value="XPGRADSUPER"/>
</dbReference>
<dbReference type="SMART" id="SM00475">
    <property type="entry name" value="53EXOc"/>
    <property type="match status" value="1"/>
</dbReference>
<dbReference type="SMART" id="SM00279">
    <property type="entry name" value="HhH2"/>
    <property type="match status" value="1"/>
</dbReference>
<dbReference type="SMART" id="SM00484">
    <property type="entry name" value="XPGI"/>
    <property type="match status" value="1"/>
</dbReference>
<dbReference type="SMART" id="SM00485">
    <property type="entry name" value="XPGN"/>
    <property type="match status" value="1"/>
</dbReference>
<dbReference type="SUPFAM" id="SSF47807">
    <property type="entry name" value="5' to 3' exonuclease, C-terminal subdomain"/>
    <property type="match status" value="1"/>
</dbReference>
<dbReference type="SUPFAM" id="SSF88723">
    <property type="entry name" value="PIN domain-like"/>
    <property type="match status" value="1"/>
</dbReference>
<dbReference type="PROSITE" id="PS00841">
    <property type="entry name" value="XPG_1"/>
    <property type="match status" value="1"/>
</dbReference>
<dbReference type="PROSITE" id="PS00842">
    <property type="entry name" value="XPG_2"/>
    <property type="match status" value="1"/>
</dbReference>
<feature type="chain" id="PRO_0000403533" description="Flap endonuclease 1">
    <location>
        <begin position="1"/>
        <end position="490"/>
    </location>
</feature>
<feature type="region of interest" description="N-domain">
    <location>
        <begin position="1"/>
        <end position="106"/>
    </location>
</feature>
<feature type="region of interest" description="I-domain">
    <location>
        <begin position="124"/>
        <end position="266"/>
    </location>
</feature>
<feature type="region of interest" description="Interaction with PCNA" evidence="1">
    <location>
        <begin position="351"/>
        <end position="359"/>
    </location>
</feature>
<feature type="region of interest" description="Disordered" evidence="2">
    <location>
        <begin position="364"/>
        <end position="396"/>
    </location>
</feature>
<feature type="region of interest" description="Disordered" evidence="2">
    <location>
        <begin position="421"/>
        <end position="490"/>
    </location>
</feature>
<feature type="compositionally biased region" description="Polar residues" evidence="2">
    <location>
        <begin position="430"/>
        <end position="442"/>
    </location>
</feature>
<feature type="compositionally biased region" description="Basic and acidic residues" evidence="2">
    <location>
        <begin position="443"/>
        <end position="454"/>
    </location>
</feature>
<feature type="compositionally biased region" description="Polar residues" evidence="2">
    <location>
        <begin position="455"/>
        <end position="469"/>
    </location>
</feature>
<feature type="binding site" evidence="1">
    <location>
        <position position="34"/>
    </location>
    <ligand>
        <name>Mg(2+)</name>
        <dbReference type="ChEBI" id="CHEBI:18420"/>
        <label>1</label>
    </ligand>
</feature>
<feature type="binding site" evidence="1">
    <location>
        <position position="47"/>
    </location>
    <ligand>
        <name>DNA</name>
        <dbReference type="ChEBI" id="CHEBI:16991"/>
    </ligand>
</feature>
<feature type="binding site" evidence="1">
    <location>
        <position position="72"/>
    </location>
    <ligand>
        <name>DNA</name>
        <dbReference type="ChEBI" id="CHEBI:16991"/>
    </ligand>
</feature>
<feature type="binding site" evidence="1">
    <location>
        <position position="88"/>
    </location>
    <ligand>
        <name>Mg(2+)</name>
        <dbReference type="ChEBI" id="CHEBI:18420"/>
        <label>1</label>
    </ligand>
</feature>
<feature type="binding site" evidence="1">
    <location>
        <position position="160"/>
    </location>
    <ligand>
        <name>DNA</name>
        <dbReference type="ChEBI" id="CHEBI:16991"/>
    </ligand>
</feature>
<feature type="binding site" evidence="1">
    <location>
        <position position="160"/>
    </location>
    <ligand>
        <name>Mg(2+)</name>
        <dbReference type="ChEBI" id="CHEBI:18420"/>
        <label>1</label>
    </ligand>
</feature>
<feature type="binding site" evidence="1">
    <location>
        <position position="162"/>
    </location>
    <ligand>
        <name>Mg(2+)</name>
        <dbReference type="ChEBI" id="CHEBI:18420"/>
        <label>1</label>
    </ligand>
</feature>
<feature type="binding site" evidence="1">
    <location>
        <position position="181"/>
    </location>
    <ligand>
        <name>Mg(2+)</name>
        <dbReference type="ChEBI" id="CHEBI:18420"/>
        <label>2</label>
    </ligand>
</feature>
<feature type="binding site" evidence="1">
    <location>
        <position position="183"/>
    </location>
    <ligand>
        <name>Mg(2+)</name>
        <dbReference type="ChEBI" id="CHEBI:18420"/>
        <label>2</label>
    </ligand>
</feature>
<feature type="binding site" evidence="1">
    <location>
        <position position="244"/>
    </location>
    <ligand>
        <name>DNA</name>
        <dbReference type="ChEBI" id="CHEBI:16991"/>
    </ligand>
</feature>
<feature type="binding site" evidence="1">
    <location>
        <position position="246"/>
    </location>
    <ligand>
        <name>DNA</name>
        <dbReference type="ChEBI" id="CHEBI:16991"/>
    </ligand>
</feature>
<feature type="binding site" evidence="1">
    <location>
        <position position="246"/>
    </location>
    <ligand>
        <name>Mg(2+)</name>
        <dbReference type="ChEBI" id="CHEBI:18420"/>
        <label>2</label>
    </ligand>
</feature>
<organism>
    <name type="scientific">Cryptosporidium parvum (strain Iowa II)</name>
    <dbReference type="NCBI Taxonomy" id="353152"/>
    <lineage>
        <taxon>Eukaryota</taxon>
        <taxon>Sar</taxon>
        <taxon>Alveolata</taxon>
        <taxon>Apicomplexa</taxon>
        <taxon>Conoidasida</taxon>
        <taxon>Coccidia</taxon>
        <taxon>Eucoccidiorida</taxon>
        <taxon>Eimeriorina</taxon>
        <taxon>Cryptosporidiidae</taxon>
        <taxon>Cryptosporidium</taxon>
    </lineage>
</organism>
<gene>
    <name evidence="1" type="primary">FEN1</name>
    <name type="ORF">cgd7_2140</name>
</gene>
<reference key="1">
    <citation type="journal article" date="2004" name="Science">
        <title>Complete genome sequence of the apicomplexan, Cryptosporidium parvum.</title>
        <authorList>
            <person name="Abrahamsen M.S."/>
            <person name="Templeton T.J."/>
            <person name="Enomoto S."/>
            <person name="Abrahante J.E."/>
            <person name="Zhu G."/>
            <person name="Lancto C.A."/>
            <person name="Deng M."/>
            <person name="Liu C."/>
            <person name="Widmer G."/>
            <person name="Tzipori S."/>
            <person name="Buck G.A."/>
            <person name="Xu P."/>
            <person name="Bankier A.T."/>
            <person name="Dear P.H."/>
            <person name="Konfortov B.A."/>
            <person name="Spriggs H.F."/>
            <person name="Iyer L."/>
            <person name="Anantharaman V."/>
            <person name="Aravind L."/>
            <person name="Kapur V."/>
        </authorList>
    </citation>
    <scope>NUCLEOTIDE SEQUENCE [LARGE SCALE GENOMIC DNA]</scope>
    <source>
        <strain>Iowa II</strain>
    </source>
</reference>
<name>FEN1_CRYPI</name>
<evidence type="ECO:0000255" key="1">
    <source>
        <dbReference type="HAMAP-Rule" id="MF_03140"/>
    </source>
</evidence>
<evidence type="ECO:0000256" key="2">
    <source>
        <dbReference type="SAM" id="MobiDB-lite"/>
    </source>
</evidence>